<keyword id="KW-0030">Aminoacyl-tRNA synthetase</keyword>
<keyword id="KW-0067">ATP-binding</keyword>
<keyword id="KW-0963">Cytoplasm</keyword>
<keyword id="KW-0436">Ligase</keyword>
<keyword id="KW-0547">Nucleotide-binding</keyword>
<keyword id="KW-0648">Protein biosynthesis</keyword>
<keyword id="KW-1185">Reference proteome</keyword>
<keyword id="KW-0694">RNA-binding</keyword>
<organism>
    <name type="scientific">Nitrosomonas europaea (strain ATCC 19718 / CIP 103999 / KCTC 2705 / NBRC 14298)</name>
    <dbReference type="NCBI Taxonomy" id="228410"/>
    <lineage>
        <taxon>Bacteria</taxon>
        <taxon>Pseudomonadati</taxon>
        <taxon>Pseudomonadota</taxon>
        <taxon>Betaproteobacteria</taxon>
        <taxon>Nitrosomonadales</taxon>
        <taxon>Nitrosomonadaceae</taxon>
        <taxon>Nitrosomonas</taxon>
    </lineage>
</organism>
<gene>
    <name evidence="1" type="primary">tyrS</name>
    <name type="ordered locus">NE1431</name>
</gene>
<proteinExistence type="inferred from homology"/>
<reference key="1">
    <citation type="journal article" date="2003" name="J. Bacteriol.">
        <title>Complete genome sequence of the ammonia-oxidizing bacterium and obligate chemolithoautotroph Nitrosomonas europaea.</title>
        <authorList>
            <person name="Chain P."/>
            <person name="Lamerdin J.E."/>
            <person name="Larimer F.W."/>
            <person name="Regala W."/>
            <person name="Lao V."/>
            <person name="Land M.L."/>
            <person name="Hauser L."/>
            <person name="Hooper A.B."/>
            <person name="Klotz M.G."/>
            <person name="Norton J."/>
            <person name="Sayavedra-Soto L.A."/>
            <person name="Arciero D.M."/>
            <person name="Hommes N.G."/>
            <person name="Whittaker M.M."/>
            <person name="Arp D.J."/>
        </authorList>
    </citation>
    <scope>NUCLEOTIDE SEQUENCE [LARGE SCALE GENOMIC DNA]</scope>
    <source>
        <strain>ATCC 19718 / CIP 103999 / KCTC 2705 / NBRC 14298</strain>
    </source>
</reference>
<name>SYY_NITEU</name>
<comment type="function">
    <text evidence="1">Catalyzes the attachment of tyrosine to tRNA(Tyr) in a two-step reaction: tyrosine is first activated by ATP to form Tyr-AMP and then transferred to the acceptor end of tRNA(Tyr).</text>
</comment>
<comment type="catalytic activity">
    <reaction evidence="1">
        <text>tRNA(Tyr) + L-tyrosine + ATP = L-tyrosyl-tRNA(Tyr) + AMP + diphosphate + H(+)</text>
        <dbReference type="Rhea" id="RHEA:10220"/>
        <dbReference type="Rhea" id="RHEA-COMP:9706"/>
        <dbReference type="Rhea" id="RHEA-COMP:9707"/>
        <dbReference type="ChEBI" id="CHEBI:15378"/>
        <dbReference type="ChEBI" id="CHEBI:30616"/>
        <dbReference type="ChEBI" id="CHEBI:33019"/>
        <dbReference type="ChEBI" id="CHEBI:58315"/>
        <dbReference type="ChEBI" id="CHEBI:78442"/>
        <dbReference type="ChEBI" id="CHEBI:78536"/>
        <dbReference type="ChEBI" id="CHEBI:456215"/>
        <dbReference type="EC" id="6.1.1.1"/>
    </reaction>
</comment>
<comment type="subunit">
    <text evidence="1">Homodimer.</text>
</comment>
<comment type="subcellular location">
    <subcellularLocation>
        <location evidence="1">Cytoplasm</location>
    </subcellularLocation>
</comment>
<comment type="similarity">
    <text evidence="1">Belongs to the class-I aminoacyl-tRNA synthetase family. TyrS type 2 subfamily.</text>
</comment>
<dbReference type="EC" id="6.1.1.1" evidence="1"/>
<dbReference type="EMBL" id="AL954747">
    <property type="protein sequence ID" value="CAD85342.1"/>
    <property type="molecule type" value="Genomic_DNA"/>
</dbReference>
<dbReference type="RefSeq" id="WP_011111999.1">
    <property type="nucleotide sequence ID" value="NC_004757.1"/>
</dbReference>
<dbReference type="SMR" id="Q82UQ1"/>
<dbReference type="STRING" id="228410.NE1431"/>
<dbReference type="GeneID" id="87104605"/>
<dbReference type="KEGG" id="neu:NE1431"/>
<dbReference type="eggNOG" id="COG0162">
    <property type="taxonomic scope" value="Bacteria"/>
</dbReference>
<dbReference type="HOGENOM" id="CLU_024003_5_0_4"/>
<dbReference type="OrthoDB" id="9804243at2"/>
<dbReference type="PhylomeDB" id="Q82UQ1"/>
<dbReference type="Proteomes" id="UP000001416">
    <property type="component" value="Chromosome"/>
</dbReference>
<dbReference type="GO" id="GO:0005829">
    <property type="term" value="C:cytosol"/>
    <property type="evidence" value="ECO:0007669"/>
    <property type="project" value="TreeGrafter"/>
</dbReference>
<dbReference type="GO" id="GO:0005524">
    <property type="term" value="F:ATP binding"/>
    <property type="evidence" value="ECO:0007669"/>
    <property type="project" value="UniProtKB-UniRule"/>
</dbReference>
<dbReference type="GO" id="GO:0003723">
    <property type="term" value="F:RNA binding"/>
    <property type="evidence" value="ECO:0007669"/>
    <property type="project" value="UniProtKB-KW"/>
</dbReference>
<dbReference type="GO" id="GO:0004831">
    <property type="term" value="F:tyrosine-tRNA ligase activity"/>
    <property type="evidence" value="ECO:0007669"/>
    <property type="project" value="UniProtKB-UniRule"/>
</dbReference>
<dbReference type="GO" id="GO:0006437">
    <property type="term" value="P:tyrosyl-tRNA aminoacylation"/>
    <property type="evidence" value="ECO:0007669"/>
    <property type="project" value="UniProtKB-UniRule"/>
</dbReference>
<dbReference type="CDD" id="cd00165">
    <property type="entry name" value="S4"/>
    <property type="match status" value="1"/>
</dbReference>
<dbReference type="CDD" id="cd00805">
    <property type="entry name" value="TyrRS_core"/>
    <property type="match status" value="1"/>
</dbReference>
<dbReference type="FunFam" id="1.10.240.10:FF:000006">
    <property type="entry name" value="Tyrosine--tRNA ligase"/>
    <property type="match status" value="1"/>
</dbReference>
<dbReference type="FunFam" id="3.40.50.620:FF:000061">
    <property type="entry name" value="Tyrosine--tRNA ligase"/>
    <property type="match status" value="1"/>
</dbReference>
<dbReference type="Gene3D" id="3.40.50.620">
    <property type="entry name" value="HUPs"/>
    <property type="match status" value="1"/>
</dbReference>
<dbReference type="Gene3D" id="3.10.290.10">
    <property type="entry name" value="RNA-binding S4 domain"/>
    <property type="match status" value="1"/>
</dbReference>
<dbReference type="Gene3D" id="1.10.240.10">
    <property type="entry name" value="Tyrosyl-Transfer RNA Synthetase"/>
    <property type="match status" value="1"/>
</dbReference>
<dbReference type="HAMAP" id="MF_02007">
    <property type="entry name" value="Tyr_tRNA_synth_type2"/>
    <property type="match status" value="1"/>
</dbReference>
<dbReference type="InterPro" id="IPR001412">
    <property type="entry name" value="aa-tRNA-synth_I_CS"/>
</dbReference>
<dbReference type="InterPro" id="IPR002305">
    <property type="entry name" value="aa-tRNA-synth_Ic"/>
</dbReference>
<dbReference type="InterPro" id="IPR014729">
    <property type="entry name" value="Rossmann-like_a/b/a_fold"/>
</dbReference>
<dbReference type="InterPro" id="IPR002942">
    <property type="entry name" value="S4_RNA-bd"/>
</dbReference>
<dbReference type="InterPro" id="IPR036986">
    <property type="entry name" value="S4_RNA-bd_sf"/>
</dbReference>
<dbReference type="InterPro" id="IPR002307">
    <property type="entry name" value="Tyr-tRNA-ligase"/>
</dbReference>
<dbReference type="InterPro" id="IPR024088">
    <property type="entry name" value="Tyr-tRNA-ligase_bac-type"/>
</dbReference>
<dbReference type="InterPro" id="IPR024108">
    <property type="entry name" value="Tyr-tRNA-ligase_bac_2"/>
</dbReference>
<dbReference type="NCBIfam" id="TIGR00234">
    <property type="entry name" value="tyrS"/>
    <property type="match status" value="1"/>
</dbReference>
<dbReference type="PANTHER" id="PTHR11766:SF1">
    <property type="entry name" value="TYROSINE--TRNA LIGASE"/>
    <property type="match status" value="1"/>
</dbReference>
<dbReference type="PANTHER" id="PTHR11766">
    <property type="entry name" value="TYROSYL-TRNA SYNTHETASE"/>
    <property type="match status" value="1"/>
</dbReference>
<dbReference type="Pfam" id="PF01479">
    <property type="entry name" value="S4"/>
    <property type="match status" value="1"/>
</dbReference>
<dbReference type="Pfam" id="PF00579">
    <property type="entry name" value="tRNA-synt_1b"/>
    <property type="match status" value="1"/>
</dbReference>
<dbReference type="PRINTS" id="PR01040">
    <property type="entry name" value="TRNASYNTHTYR"/>
</dbReference>
<dbReference type="SMART" id="SM00363">
    <property type="entry name" value="S4"/>
    <property type="match status" value="1"/>
</dbReference>
<dbReference type="SUPFAM" id="SSF55174">
    <property type="entry name" value="Alpha-L RNA-binding motif"/>
    <property type="match status" value="1"/>
</dbReference>
<dbReference type="SUPFAM" id="SSF52374">
    <property type="entry name" value="Nucleotidylyl transferase"/>
    <property type="match status" value="1"/>
</dbReference>
<dbReference type="PROSITE" id="PS00178">
    <property type="entry name" value="AA_TRNA_LIGASE_I"/>
    <property type="match status" value="1"/>
</dbReference>
<dbReference type="PROSITE" id="PS50889">
    <property type="entry name" value="S4"/>
    <property type="match status" value="1"/>
</dbReference>
<sequence length="409" mass="45938">MSESISHQLQLIRRGCQELLIEEEFAQKLAQGRPLRVKAGFDPTAPDLHLGHTVLLNKLRQLQDLGHHILFLIGDFTGMIGDPSGKSATRPPLTREQITQNADTYASQVFKILKPEQTEVVFNSSWMDKFSAADVIRLAATYTVARMLERDDFSKRYHENRPIAIHEFLYPLVQGYDSVALKADLELGGTDQKFNLLVGRELQKHYGQPPQCILTMPLLEGLDGIQKMSKSLNNYVGINESPAEIFGKLMSVSDTLMWRYIELLSFESLETVRQWQNEVESGCNPREIKMRFAREIVARFHSQTDAVRAAEEFEARFSKGVIPDDIPEKKLYIQDAGLALPQLLKLAGLTASTSEALRMIEQGGVKLNGDKVSDKTRIIPSNVTVIAQIGKRKFAKVTLVTEQSGKQAN</sequence>
<protein>
    <recommendedName>
        <fullName evidence="1">Tyrosine--tRNA ligase</fullName>
        <ecNumber evidence="1">6.1.1.1</ecNumber>
    </recommendedName>
    <alternativeName>
        <fullName evidence="1">Tyrosyl-tRNA synthetase</fullName>
        <shortName evidence="1">TyrRS</shortName>
    </alternativeName>
</protein>
<evidence type="ECO:0000255" key="1">
    <source>
        <dbReference type="HAMAP-Rule" id="MF_02007"/>
    </source>
</evidence>
<accession>Q82UQ1</accession>
<feature type="chain" id="PRO_0000236737" description="Tyrosine--tRNA ligase">
    <location>
        <begin position="1"/>
        <end position="409"/>
    </location>
</feature>
<feature type="domain" description="S4 RNA-binding" evidence="1">
    <location>
        <begin position="338"/>
        <end position="399"/>
    </location>
</feature>
<feature type="short sequence motif" description="'HIGH' region">
    <location>
        <begin position="43"/>
        <end position="52"/>
    </location>
</feature>
<feature type="short sequence motif" description="'KMSKS' region">
    <location>
        <begin position="227"/>
        <end position="231"/>
    </location>
</feature>
<feature type="binding site" evidence="1">
    <location>
        <position position="230"/>
    </location>
    <ligand>
        <name>ATP</name>
        <dbReference type="ChEBI" id="CHEBI:30616"/>
    </ligand>
</feature>